<sequence length="214" mass="24337">MLCSRGFQSSLSPLMDFYWPVRSLWPEVRPLLSQRDLLQRNLLEVKSSLELMAKLQQQIFEELDNVPSSLTIQPVSYKHDKDGEGFALTLDTKDFSPEELSVKQVGRKLRVSGKTEKKLDDGEGSYSYRCQEFRQEFDLPEKVNPETVTCSLAHDGKLHIQAPKNTLSGEEEVAERVVPINCSLDVKTPQFLSKTEGSITDTQKKQENTISKED</sequence>
<organism>
    <name type="scientific">Oncorhynchus tshawytscha</name>
    <name type="common">Chinook salmon</name>
    <name type="synonym">Salmo tshawytscha</name>
    <dbReference type="NCBI Taxonomy" id="74940"/>
    <lineage>
        <taxon>Eukaryota</taxon>
        <taxon>Metazoa</taxon>
        <taxon>Chordata</taxon>
        <taxon>Craniata</taxon>
        <taxon>Vertebrata</taxon>
        <taxon>Euteleostomi</taxon>
        <taxon>Actinopterygii</taxon>
        <taxon>Neopterygii</taxon>
        <taxon>Teleostei</taxon>
        <taxon>Protacanthopterygii</taxon>
        <taxon>Salmoniformes</taxon>
        <taxon>Salmonidae</taxon>
        <taxon>Salmoninae</taxon>
        <taxon>Oncorhynchus</taxon>
    </lineage>
</organism>
<name>HSP30_ONCTS</name>
<gene>
    <name type="primary">hsp30</name>
</gene>
<dbReference type="EMBL" id="U19370">
    <property type="protein sequence ID" value="AAA75296.1"/>
    <property type="molecule type" value="mRNA"/>
</dbReference>
<dbReference type="SMR" id="P42931"/>
<dbReference type="Proteomes" id="UP000694402">
    <property type="component" value="Unplaced"/>
</dbReference>
<dbReference type="GO" id="GO:0005737">
    <property type="term" value="C:cytoplasm"/>
    <property type="evidence" value="ECO:0007669"/>
    <property type="project" value="TreeGrafter"/>
</dbReference>
<dbReference type="GO" id="GO:0005634">
    <property type="term" value="C:nucleus"/>
    <property type="evidence" value="ECO:0007669"/>
    <property type="project" value="TreeGrafter"/>
</dbReference>
<dbReference type="GO" id="GO:0051082">
    <property type="term" value="F:unfolded protein binding"/>
    <property type="evidence" value="ECO:0007669"/>
    <property type="project" value="TreeGrafter"/>
</dbReference>
<dbReference type="GO" id="GO:0042026">
    <property type="term" value="P:protein refolding"/>
    <property type="evidence" value="ECO:0007669"/>
    <property type="project" value="TreeGrafter"/>
</dbReference>
<dbReference type="GO" id="GO:0009408">
    <property type="term" value="P:response to heat"/>
    <property type="evidence" value="ECO:0007669"/>
    <property type="project" value="TreeGrafter"/>
</dbReference>
<dbReference type="CDD" id="cd06481">
    <property type="entry name" value="ACD_HspB9_like"/>
    <property type="match status" value="1"/>
</dbReference>
<dbReference type="Gene3D" id="2.60.40.790">
    <property type="match status" value="1"/>
</dbReference>
<dbReference type="InterPro" id="IPR002068">
    <property type="entry name" value="A-crystallin/Hsp20_dom"/>
</dbReference>
<dbReference type="InterPro" id="IPR001436">
    <property type="entry name" value="Alpha-crystallin/sHSP_animal"/>
</dbReference>
<dbReference type="InterPro" id="IPR008978">
    <property type="entry name" value="HSP20-like_chaperone"/>
</dbReference>
<dbReference type="PANTHER" id="PTHR45640:SF2">
    <property type="entry name" value="HEAT SHOCK PROTEIN BETA-11-RELATED"/>
    <property type="match status" value="1"/>
</dbReference>
<dbReference type="PANTHER" id="PTHR45640">
    <property type="entry name" value="HEAT SHOCK PROTEIN HSP-12.2-RELATED"/>
    <property type="match status" value="1"/>
</dbReference>
<dbReference type="Pfam" id="PF00011">
    <property type="entry name" value="HSP20"/>
    <property type="match status" value="1"/>
</dbReference>
<dbReference type="SUPFAM" id="SSF49764">
    <property type="entry name" value="HSP20-like chaperones"/>
    <property type="match status" value="1"/>
</dbReference>
<dbReference type="PROSITE" id="PS01031">
    <property type="entry name" value="SHSP"/>
    <property type="match status" value="1"/>
</dbReference>
<reference key="1">
    <citation type="submission" date="1995-01" db="EMBL/GenBank/DDBJ databases">
        <title>Stress proteins are biomarkers for thermal injury in chinook salmon exposed to sub-lethal temperatures.</title>
        <authorList>
            <person name="Hargis M."/>
            <person name="Goff H."/>
            <person name="Hickey E."/>
            <person name="Weber L.A."/>
        </authorList>
    </citation>
    <scope>NUCLEOTIDE SEQUENCE [MRNA]</scope>
</reference>
<proteinExistence type="evidence at transcript level"/>
<accession>P42931</accession>
<comment type="similarity">
    <text evidence="1">Belongs to the small heat shock protein (HSP20) family.</text>
</comment>
<evidence type="ECO:0000255" key="1">
    <source>
        <dbReference type="PROSITE-ProRule" id="PRU00285"/>
    </source>
</evidence>
<evidence type="ECO:0000256" key="2">
    <source>
        <dbReference type="SAM" id="MobiDB-lite"/>
    </source>
</evidence>
<feature type="chain" id="PRO_0000125952" description="Heat shock protein 30">
    <location>
        <begin position="1"/>
        <end position="214"/>
    </location>
</feature>
<feature type="domain" description="sHSP" evidence="1">
    <location>
        <begin position="66"/>
        <end position="183"/>
    </location>
</feature>
<feature type="region of interest" description="Disordered" evidence="2">
    <location>
        <begin position="193"/>
        <end position="214"/>
    </location>
</feature>
<feature type="compositionally biased region" description="Basic and acidic residues" evidence="2">
    <location>
        <begin position="202"/>
        <end position="214"/>
    </location>
</feature>
<protein>
    <recommendedName>
        <fullName>Heat shock protein 30</fullName>
        <shortName>HSP 30</shortName>
    </recommendedName>
</protein>
<keyword id="KW-1185">Reference proteome</keyword>
<keyword id="KW-0346">Stress response</keyword>